<feature type="chain" id="PRO_0000206552" description="Inner membrane-spanning protein YciB">
    <location>
        <begin position="1"/>
        <end position="187"/>
    </location>
</feature>
<feature type="transmembrane region" description="Helical" evidence="1">
    <location>
        <begin position="22"/>
        <end position="42"/>
    </location>
</feature>
<feature type="transmembrane region" description="Helical" evidence="1">
    <location>
        <begin position="50"/>
        <end position="70"/>
    </location>
</feature>
<feature type="transmembrane region" description="Helical" evidence="1">
    <location>
        <begin position="80"/>
        <end position="100"/>
    </location>
</feature>
<feature type="transmembrane region" description="Helical" evidence="1">
    <location>
        <begin position="118"/>
        <end position="138"/>
    </location>
</feature>
<feature type="transmembrane region" description="Helical" evidence="1">
    <location>
        <begin position="148"/>
        <end position="168"/>
    </location>
</feature>
<gene>
    <name evidence="1" type="primary">yciB</name>
    <name type="ordered locus">VP1970</name>
</gene>
<protein>
    <recommendedName>
        <fullName evidence="1">Inner membrane-spanning protein YciB</fullName>
    </recommendedName>
</protein>
<sequence>MKQILDFIPLIIFFALYKMYDIYVATGALIVATAVQLIVTYALYKKVEKMQLITFVIVTIFGSMTIFFHDDNFIKWKVTIIYVVLAVGLTASHLMGKSVVKGMLGKEITLPDAIWAKINWAWVGFFSFFAGLNIYIAYELPLDVWVNFKVFGMLIATFAYMIATGVYIYKHMPKEEKNNSSDVSVDD</sequence>
<keyword id="KW-0997">Cell inner membrane</keyword>
<keyword id="KW-1003">Cell membrane</keyword>
<keyword id="KW-0472">Membrane</keyword>
<keyword id="KW-0812">Transmembrane</keyword>
<keyword id="KW-1133">Transmembrane helix</keyword>
<reference key="1">
    <citation type="journal article" date="2003" name="Lancet">
        <title>Genome sequence of Vibrio parahaemolyticus: a pathogenic mechanism distinct from that of V. cholerae.</title>
        <authorList>
            <person name="Makino K."/>
            <person name="Oshima K."/>
            <person name="Kurokawa K."/>
            <person name="Yokoyama K."/>
            <person name="Uda T."/>
            <person name="Tagomori K."/>
            <person name="Iijima Y."/>
            <person name="Najima M."/>
            <person name="Nakano M."/>
            <person name="Yamashita A."/>
            <person name="Kubota Y."/>
            <person name="Kimura S."/>
            <person name="Yasunaga T."/>
            <person name="Honda T."/>
            <person name="Shinagawa H."/>
            <person name="Hattori M."/>
            <person name="Iida T."/>
        </authorList>
    </citation>
    <scope>NUCLEOTIDE SEQUENCE [LARGE SCALE GENOMIC DNA]</scope>
    <source>
        <strain>RIMD 2210633</strain>
    </source>
</reference>
<comment type="function">
    <text evidence="1">Plays a role in cell envelope biogenesis, maintenance of cell envelope integrity and membrane homeostasis.</text>
</comment>
<comment type="subcellular location">
    <subcellularLocation>
        <location evidence="1">Cell inner membrane</location>
        <topology evidence="1">Multi-pass membrane protein</topology>
    </subcellularLocation>
</comment>
<comment type="similarity">
    <text evidence="1">Belongs to the YciB family.</text>
</comment>
<name>YCIB_VIBPA</name>
<dbReference type="EMBL" id="BA000031">
    <property type="protein sequence ID" value="BAC60233.1"/>
    <property type="molecule type" value="Genomic_DNA"/>
</dbReference>
<dbReference type="RefSeq" id="NP_798349.1">
    <property type="nucleotide sequence ID" value="NC_004603.1"/>
</dbReference>
<dbReference type="RefSeq" id="WP_005481614.1">
    <property type="nucleotide sequence ID" value="NC_004603.1"/>
</dbReference>
<dbReference type="GeneID" id="1189481"/>
<dbReference type="KEGG" id="vpa:VP1970"/>
<dbReference type="PATRIC" id="fig|223926.6.peg.1883"/>
<dbReference type="eggNOG" id="COG2917">
    <property type="taxonomic scope" value="Bacteria"/>
</dbReference>
<dbReference type="HOGENOM" id="CLU_089554_2_0_6"/>
<dbReference type="Proteomes" id="UP000002493">
    <property type="component" value="Chromosome 1"/>
</dbReference>
<dbReference type="GO" id="GO:0005886">
    <property type="term" value="C:plasma membrane"/>
    <property type="evidence" value="ECO:0007669"/>
    <property type="project" value="UniProtKB-SubCell"/>
</dbReference>
<dbReference type="HAMAP" id="MF_00189">
    <property type="entry name" value="YciB"/>
    <property type="match status" value="1"/>
</dbReference>
<dbReference type="InterPro" id="IPR006008">
    <property type="entry name" value="YciB"/>
</dbReference>
<dbReference type="NCBIfam" id="TIGR00997">
    <property type="entry name" value="ispZ"/>
    <property type="match status" value="1"/>
</dbReference>
<dbReference type="NCBIfam" id="NF001324">
    <property type="entry name" value="PRK00259.1-2"/>
    <property type="match status" value="1"/>
</dbReference>
<dbReference type="NCBIfam" id="NF001325">
    <property type="entry name" value="PRK00259.1-3"/>
    <property type="match status" value="1"/>
</dbReference>
<dbReference type="PANTHER" id="PTHR36917:SF1">
    <property type="entry name" value="INNER MEMBRANE-SPANNING PROTEIN YCIB"/>
    <property type="match status" value="1"/>
</dbReference>
<dbReference type="PANTHER" id="PTHR36917">
    <property type="entry name" value="INTRACELLULAR SEPTATION PROTEIN A-RELATED"/>
    <property type="match status" value="1"/>
</dbReference>
<dbReference type="Pfam" id="PF04279">
    <property type="entry name" value="IspA"/>
    <property type="match status" value="1"/>
</dbReference>
<proteinExistence type="inferred from homology"/>
<organism>
    <name type="scientific">Vibrio parahaemolyticus serotype O3:K6 (strain RIMD 2210633)</name>
    <dbReference type="NCBI Taxonomy" id="223926"/>
    <lineage>
        <taxon>Bacteria</taxon>
        <taxon>Pseudomonadati</taxon>
        <taxon>Pseudomonadota</taxon>
        <taxon>Gammaproteobacteria</taxon>
        <taxon>Vibrionales</taxon>
        <taxon>Vibrionaceae</taxon>
        <taxon>Vibrio</taxon>
    </lineage>
</organism>
<evidence type="ECO:0000255" key="1">
    <source>
        <dbReference type="HAMAP-Rule" id="MF_00189"/>
    </source>
</evidence>
<accession>Q87NA5</accession>